<keyword id="KW-0413">Isomerase</keyword>
<keyword id="KW-0460">Magnesium</keyword>
<keyword id="KW-0479">Metal-binding</keyword>
<keyword id="KW-0597">Phosphoprotein</keyword>
<evidence type="ECO:0000255" key="1">
    <source>
        <dbReference type="HAMAP-Rule" id="MF_01554"/>
    </source>
</evidence>
<name>GLMM_GEOTN</name>
<comment type="function">
    <text evidence="1">Catalyzes the conversion of glucosamine-6-phosphate to glucosamine-1-phosphate.</text>
</comment>
<comment type="catalytic activity">
    <reaction evidence="1">
        <text>alpha-D-glucosamine 1-phosphate = D-glucosamine 6-phosphate</text>
        <dbReference type="Rhea" id="RHEA:23424"/>
        <dbReference type="ChEBI" id="CHEBI:58516"/>
        <dbReference type="ChEBI" id="CHEBI:58725"/>
        <dbReference type="EC" id="5.4.2.10"/>
    </reaction>
</comment>
<comment type="cofactor">
    <cofactor evidence="1">
        <name>Mg(2+)</name>
        <dbReference type="ChEBI" id="CHEBI:18420"/>
    </cofactor>
    <text evidence="1">Binds 1 Mg(2+) ion per subunit.</text>
</comment>
<comment type="PTM">
    <text evidence="1">Activated by phosphorylation.</text>
</comment>
<comment type="similarity">
    <text evidence="1">Belongs to the phosphohexose mutase family.</text>
</comment>
<proteinExistence type="inferred from homology"/>
<sequence>MGKYFGTDGVRGVANRELTPELAFKIGRCGGYVLTKSAERPKVLIGRDTRISGHMLEGALVAGLLSIGAEVMRLGVISTPGVAYLTKALGAQAGIMISASHNPVQDNGIKFFGPDGFKLSDEQEQEIETLIDSPEDMLPRPIGSSLGQVNDYFEGGQKYLQYLKQTIDEDFSGMKIALDCAHGATSSLATYLFADLEADVITMGASPNGLNINEGVGSTHPEALAAFVKEKGADVGLAFDGDGDRLIAVDERGNIVDGDQIMYICAKYLKETGRLKQQTVVSTVMSNLGFYKALEAQGISSVQTAVGDRYVVEEMKKNGYNLGGEQSGHIIFLDYNTTGDGMLTALQLVNIMKIKGKPLSELAGEMKKYPQLLVNVRVTDKEKAMEHEQVKKVIAEVEAEMNGNGRVLVRPSGTEPLVRVMAEAPTEEACRTYVERIADVIRREMGVE</sequence>
<gene>
    <name evidence="1" type="primary">glmM</name>
    <name type="ordered locus">GTNG_0151</name>
</gene>
<reference key="1">
    <citation type="journal article" date="2007" name="Proc. Natl. Acad. Sci. U.S.A.">
        <title>Genome and proteome of long-chain alkane degrading Geobacillus thermodenitrificans NG80-2 isolated from a deep-subsurface oil reservoir.</title>
        <authorList>
            <person name="Feng L."/>
            <person name="Wang W."/>
            <person name="Cheng J."/>
            <person name="Ren Y."/>
            <person name="Zhao G."/>
            <person name="Gao C."/>
            <person name="Tang Y."/>
            <person name="Liu X."/>
            <person name="Han W."/>
            <person name="Peng X."/>
            <person name="Liu R."/>
            <person name="Wang L."/>
        </authorList>
    </citation>
    <scope>NUCLEOTIDE SEQUENCE [LARGE SCALE GENOMIC DNA]</scope>
    <source>
        <strain>NG80-2</strain>
    </source>
</reference>
<protein>
    <recommendedName>
        <fullName evidence="1">Phosphoglucosamine mutase</fullName>
        <ecNumber evidence="1">5.4.2.10</ecNumber>
    </recommendedName>
</protein>
<feature type="chain" id="PRO_0000301319" description="Phosphoglucosamine mutase">
    <location>
        <begin position="1"/>
        <end position="448"/>
    </location>
</feature>
<feature type="active site" description="Phosphoserine intermediate" evidence="1">
    <location>
        <position position="100"/>
    </location>
</feature>
<feature type="binding site" description="via phosphate group" evidence="1">
    <location>
        <position position="100"/>
    </location>
    <ligand>
        <name>Mg(2+)</name>
        <dbReference type="ChEBI" id="CHEBI:18420"/>
    </ligand>
</feature>
<feature type="binding site" evidence="1">
    <location>
        <position position="240"/>
    </location>
    <ligand>
        <name>Mg(2+)</name>
        <dbReference type="ChEBI" id="CHEBI:18420"/>
    </ligand>
</feature>
<feature type="binding site" evidence="1">
    <location>
        <position position="242"/>
    </location>
    <ligand>
        <name>Mg(2+)</name>
        <dbReference type="ChEBI" id="CHEBI:18420"/>
    </ligand>
</feature>
<feature type="binding site" evidence="1">
    <location>
        <position position="244"/>
    </location>
    <ligand>
        <name>Mg(2+)</name>
        <dbReference type="ChEBI" id="CHEBI:18420"/>
    </ligand>
</feature>
<feature type="modified residue" description="Phosphoserine" evidence="1">
    <location>
        <position position="100"/>
    </location>
</feature>
<organism>
    <name type="scientific">Geobacillus thermodenitrificans (strain NG80-2)</name>
    <dbReference type="NCBI Taxonomy" id="420246"/>
    <lineage>
        <taxon>Bacteria</taxon>
        <taxon>Bacillati</taxon>
        <taxon>Bacillota</taxon>
        <taxon>Bacilli</taxon>
        <taxon>Bacillales</taxon>
        <taxon>Anoxybacillaceae</taxon>
        <taxon>Geobacillus</taxon>
    </lineage>
</organism>
<accession>A4IJN4</accession>
<dbReference type="EC" id="5.4.2.10" evidence="1"/>
<dbReference type="EMBL" id="CP000557">
    <property type="protein sequence ID" value="ABO65538.1"/>
    <property type="molecule type" value="Genomic_DNA"/>
</dbReference>
<dbReference type="RefSeq" id="WP_008881526.1">
    <property type="nucleotide sequence ID" value="NC_009328.1"/>
</dbReference>
<dbReference type="SMR" id="A4IJN4"/>
<dbReference type="KEGG" id="gtn:GTNG_0151"/>
<dbReference type="eggNOG" id="COG1109">
    <property type="taxonomic scope" value="Bacteria"/>
</dbReference>
<dbReference type="HOGENOM" id="CLU_016950_7_0_9"/>
<dbReference type="Proteomes" id="UP000001578">
    <property type="component" value="Chromosome"/>
</dbReference>
<dbReference type="GO" id="GO:0005829">
    <property type="term" value="C:cytosol"/>
    <property type="evidence" value="ECO:0007669"/>
    <property type="project" value="TreeGrafter"/>
</dbReference>
<dbReference type="GO" id="GO:0000287">
    <property type="term" value="F:magnesium ion binding"/>
    <property type="evidence" value="ECO:0007669"/>
    <property type="project" value="UniProtKB-UniRule"/>
</dbReference>
<dbReference type="GO" id="GO:0008966">
    <property type="term" value="F:phosphoglucosamine mutase activity"/>
    <property type="evidence" value="ECO:0007669"/>
    <property type="project" value="UniProtKB-UniRule"/>
</dbReference>
<dbReference type="GO" id="GO:0004615">
    <property type="term" value="F:phosphomannomutase activity"/>
    <property type="evidence" value="ECO:0007669"/>
    <property type="project" value="TreeGrafter"/>
</dbReference>
<dbReference type="GO" id="GO:0005975">
    <property type="term" value="P:carbohydrate metabolic process"/>
    <property type="evidence" value="ECO:0007669"/>
    <property type="project" value="InterPro"/>
</dbReference>
<dbReference type="GO" id="GO:0009252">
    <property type="term" value="P:peptidoglycan biosynthetic process"/>
    <property type="evidence" value="ECO:0007669"/>
    <property type="project" value="TreeGrafter"/>
</dbReference>
<dbReference type="GO" id="GO:0006048">
    <property type="term" value="P:UDP-N-acetylglucosamine biosynthetic process"/>
    <property type="evidence" value="ECO:0007669"/>
    <property type="project" value="TreeGrafter"/>
</dbReference>
<dbReference type="CDD" id="cd05802">
    <property type="entry name" value="GlmM"/>
    <property type="match status" value="1"/>
</dbReference>
<dbReference type="FunFam" id="3.30.310.50:FF:000001">
    <property type="entry name" value="Phosphoglucosamine mutase"/>
    <property type="match status" value="1"/>
</dbReference>
<dbReference type="FunFam" id="3.40.120.10:FF:000001">
    <property type="entry name" value="Phosphoglucosamine mutase"/>
    <property type="match status" value="1"/>
</dbReference>
<dbReference type="FunFam" id="3.40.120.10:FF:000002">
    <property type="entry name" value="Phosphoglucosamine mutase"/>
    <property type="match status" value="1"/>
</dbReference>
<dbReference type="Gene3D" id="3.40.120.10">
    <property type="entry name" value="Alpha-D-Glucose-1,6-Bisphosphate, subunit A, domain 3"/>
    <property type="match status" value="3"/>
</dbReference>
<dbReference type="Gene3D" id="3.30.310.50">
    <property type="entry name" value="Alpha-D-phosphohexomutase, C-terminal domain"/>
    <property type="match status" value="1"/>
</dbReference>
<dbReference type="HAMAP" id="MF_01554_B">
    <property type="entry name" value="GlmM_B"/>
    <property type="match status" value="1"/>
</dbReference>
<dbReference type="InterPro" id="IPR005844">
    <property type="entry name" value="A-D-PHexomutase_a/b/a-I"/>
</dbReference>
<dbReference type="InterPro" id="IPR016055">
    <property type="entry name" value="A-D-PHexomutase_a/b/a-I/II/III"/>
</dbReference>
<dbReference type="InterPro" id="IPR005845">
    <property type="entry name" value="A-D-PHexomutase_a/b/a-II"/>
</dbReference>
<dbReference type="InterPro" id="IPR005846">
    <property type="entry name" value="A-D-PHexomutase_a/b/a-III"/>
</dbReference>
<dbReference type="InterPro" id="IPR005843">
    <property type="entry name" value="A-D-PHexomutase_C"/>
</dbReference>
<dbReference type="InterPro" id="IPR036900">
    <property type="entry name" value="A-D-PHexomutase_C_sf"/>
</dbReference>
<dbReference type="InterPro" id="IPR016066">
    <property type="entry name" value="A-D-PHexomutase_CS"/>
</dbReference>
<dbReference type="InterPro" id="IPR005841">
    <property type="entry name" value="Alpha-D-phosphohexomutase_SF"/>
</dbReference>
<dbReference type="InterPro" id="IPR006352">
    <property type="entry name" value="GlmM_bact"/>
</dbReference>
<dbReference type="InterPro" id="IPR050060">
    <property type="entry name" value="Phosphoglucosamine_mutase"/>
</dbReference>
<dbReference type="NCBIfam" id="TIGR01455">
    <property type="entry name" value="glmM"/>
    <property type="match status" value="1"/>
</dbReference>
<dbReference type="NCBIfam" id="NF008139">
    <property type="entry name" value="PRK10887.1"/>
    <property type="match status" value="1"/>
</dbReference>
<dbReference type="PANTHER" id="PTHR42946:SF1">
    <property type="entry name" value="PHOSPHOGLUCOMUTASE (ALPHA-D-GLUCOSE-1,6-BISPHOSPHATE-DEPENDENT)"/>
    <property type="match status" value="1"/>
</dbReference>
<dbReference type="PANTHER" id="PTHR42946">
    <property type="entry name" value="PHOSPHOHEXOSE MUTASE"/>
    <property type="match status" value="1"/>
</dbReference>
<dbReference type="Pfam" id="PF02878">
    <property type="entry name" value="PGM_PMM_I"/>
    <property type="match status" value="1"/>
</dbReference>
<dbReference type="Pfam" id="PF02879">
    <property type="entry name" value="PGM_PMM_II"/>
    <property type="match status" value="1"/>
</dbReference>
<dbReference type="Pfam" id="PF02880">
    <property type="entry name" value="PGM_PMM_III"/>
    <property type="match status" value="1"/>
</dbReference>
<dbReference type="Pfam" id="PF00408">
    <property type="entry name" value="PGM_PMM_IV"/>
    <property type="match status" value="1"/>
</dbReference>
<dbReference type="PRINTS" id="PR00509">
    <property type="entry name" value="PGMPMM"/>
</dbReference>
<dbReference type="SUPFAM" id="SSF55957">
    <property type="entry name" value="Phosphoglucomutase, C-terminal domain"/>
    <property type="match status" value="1"/>
</dbReference>
<dbReference type="SUPFAM" id="SSF53738">
    <property type="entry name" value="Phosphoglucomutase, first 3 domains"/>
    <property type="match status" value="3"/>
</dbReference>
<dbReference type="PROSITE" id="PS00710">
    <property type="entry name" value="PGM_PMM"/>
    <property type="match status" value="1"/>
</dbReference>